<name>DF133_ARATH</name>
<keyword id="KW-0929">Antimicrobial</keyword>
<keyword id="KW-1015">Disulfide bond</keyword>
<keyword id="KW-0295">Fungicide</keyword>
<keyword id="KW-0611">Plant defense</keyword>
<keyword id="KW-1185">Reference proteome</keyword>
<keyword id="KW-0964">Secreted</keyword>
<keyword id="KW-0732">Signal</keyword>
<gene>
    <name type="primary">LCR33</name>
    <name type="ordered locus">At3g43083</name>
    <name type="ORF">F7M19</name>
</gene>
<evidence type="ECO:0000250" key="1"/>
<evidence type="ECO:0000255" key="2"/>
<evidence type="ECO:0000305" key="3"/>
<proteinExistence type="inferred from homology"/>
<protein>
    <recommendedName>
        <fullName>Putative defensin-like protein 133</fullName>
    </recommendedName>
    <alternativeName>
        <fullName>Putative low-molecular-weight cysteine-rich protein 33</fullName>
        <shortName>Protein LCR33</shortName>
    </alternativeName>
</protein>
<accession>P82748</accession>
<organism evidence="3">
    <name type="scientific">Arabidopsis thaliana</name>
    <name type="common">Mouse-ear cress</name>
    <dbReference type="NCBI Taxonomy" id="3702"/>
    <lineage>
        <taxon>Eukaryota</taxon>
        <taxon>Viridiplantae</taxon>
        <taxon>Streptophyta</taxon>
        <taxon>Embryophyta</taxon>
        <taxon>Tracheophyta</taxon>
        <taxon>Spermatophyta</taxon>
        <taxon>Magnoliopsida</taxon>
        <taxon>eudicotyledons</taxon>
        <taxon>Gunneridae</taxon>
        <taxon>Pentapetalae</taxon>
        <taxon>rosids</taxon>
        <taxon>malvids</taxon>
        <taxon>Brassicales</taxon>
        <taxon>Brassicaceae</taxon>
        <taxon>Camelineae</taxon>
        <taxon>Arabidopsis</taxon>
    </lineage>
</organism>
<feature type="signal peptide" evidence="2">
    <location>
        <begin position="1"/>
        <end position="24"/>
    </location>
</feature>
<feature type="chain" id="PRO_0000017272" description="Putative defensin-like protein 133">
    <location>
        <begin position="25"/>
        <end position="78"/>
    </location>
</feature>
<feature type="disulfide bond" evidence="1">
    <location>
        <begin position="34"/>
        <end position="75"/>
    </location>
</feature>
<feature type="disulfide bond" evidence="1">
    <location>
        <begin position="44"/>
        <end position="68"/>
    </location>
</feature>
<feature type="disulfide bond" evidence="1">
    <location>
        <begin position="49"/>
        <end position="72"/>
    </location>
</feature>
<feature type="disulfide bond" evidence="1">
    <location>
        <begin position="53"/>
        <end position="74"/>
    </location>
</feature>
<comment type="subcellular location">
    <subcellularLocation>
        <location evidence="1">Secreted</location>
    </subcellularLocation>
</comment>
<comment type="similarity">
    <text evidence="3">Belongs to the DEFL family.</text>
</comment>
<sequence length="78" mass="8960">MKRSFLLLLTILTIFIILGQGVMGNDEQLRGNRCFQIKFKTGKCVPKECQTACQEKLRKPKLKGEGFCMKECTCCFYT</sequence>
<dbReference type="EMBL" id="AL138643">
    <property type="status" value="NOT_ANNOTATED_CDS"/>
    <property type="molecule type" value="Genomic_DNA"/>
</dbReference>
<dbReference type="EMBL" id="CP002686">
    <property type="protein sequence ID" value="AEE77764.1"/>
    <property type="molecule type" value="Genomic_DNA"/>
</dbReference>
<dbReference type="RefSeq" id="NP_001030801.1">
    <property type="nucleotide sequence ID" value="NM_001035724.2"/>
</dbReference>
<dbReference type="PaxDb" id="3702-AT3G43083.1"/>
<dbReference type="ProteomicsDB" id="224079"/>
<dbReference type="EnsemblPlants" id="AT3G43083.1">
    <property type="protein sequence ID" value="AT3G43083.1"/>
    <property type="gene ID" value="AT3G43083"/>
</dbReference>
<dbReference type="GeneID" id="3769528"/>
<dbReference type="Gramene" id="AT3G43083.1">
    <property type="protein sequence ID" value="AT3G43083.1"/>
    <property type="gene ID" value="AT3G43083"/>
</dbReference>
<dbReference type="KEGG" id="ath:AT3G43083"/>
<dbReference type="Araport" id="AT3G43083"/>
<dbReference type="TAIR" id="AT3G43083">
    <property type="gene designation" value="LCR33"/>
</dbReference>
<dbReference type="HOGENOM" id="CLU_182511_0_0_1"/>
<dbReference type="InParanoid" id="P82748"/>
<dbReference type="PhylomeDB" id="P82748"/>
<dbReference type="PRO" id="PR:P82748"/>
<dbReference type="Proteomes" id="UP000006548">
    <property type="component" value="Chromosome 3"/>
</dbReference>
<dbReference type="ExpressionAtlas" id="P82748">
    <property type="expression patterns" value="baseline"/>
</dbReference>
<dbReference type="GO" id="GO:0005576">
    <property type="term" value="C:extracellular region"/>
    <property type="evidence" value="ECO:0007669"/>
    <property type="project" value="UniProtKB-SubCell"/>
</dbReference>
<dbReference type="GO" id="GO:0050832">
    <property type="term" value="P:defense response to fungus"/>
    <property type="evidence" value="ECO:0007669"/>
    <property type="project" value="UniProtKB-KW"/>
</dbReference>
<dbReference type="GO" id="GO:0031640">
    <property type="term" value="P:killing of cells of another organism"/>
    <property type="evidence" value="ECO:0007669"/>
    <property type="project" value="UniProtKB-KW"/>
</dbReference>
<dbReference type="InterPro" id="IPR010851">
    <property type="entry name" value="DEFL"/>
</dbReference>
<dbReference type="PANTHER" id="PTHR34783">
    <property type="entry name" value="DEFENSIN-LIKE PROTEIN 144-RELATED"/>
    <property type="match status" value="1"/>
</dbReference>
<dbReference type="PANTHER" id="PTHR34783:SF1">
    <property type="entry name" value="DEFENSIN-LIKE PROTEIN 144-RELATED"/>
    <property type="match status" value="1"/>
</dbReference>
<reference evidence="3" key="1">
    <citation type="journal article" date="2000" name="Nature">
        <title>Sequence and analysis of chromosome 3 of the plant Arabidopsis thaliana.</title>
        <authorList>
            <person name="Salanoubat M."/>
            <person name="Lemcke K."/>
            <person name="Rieger M."/>
            <person name="Ansorge W."/>
            <person name="Unseld M."/>
            <person name="Fartmann B."/>
            <person name="Valle G."/>
            <person name="Bloecker H."/>
            <person name="Perez-Alonso M."/>
            <person name="Obermaier B."/>
            <person name="Delseny M."/>
            <person name="Boutry M."/>
            <person name="Grivell L.A."/>
            <person name="Mache R."/>
            <person name="Puigdomenech P."/>
            <person name="De Simone V."/>
            <person name="Choisne N."/>
            <person name="Artiguenave F."/>
            <person name="Robert C."/>
            <person name="Brottier P."/>
            <person name="Wincker P."/>
            <person name="Cattolico L."/>
            <person name="Weissenbach J."/>
            <person name="Saurin W."/>
            <person name="Quetier F."/>
            <person name="Schaefer M."/>
            <person name="Mueller-Auer S."/>
            <person name="Gabel C."/>
            <person name="Fuchs M."/>
            <person name="Benes V."/>
            <person name="Wurmbach E."/>
            <person name="Drzonek H."/>
            <person name="Erfle H."/>
            <person name="Jordan N."/>
            <person name="Bangert S."/>
            <person name="Wiedelmann R."/>
            <person name="Kranz H."/>
            <person name="Voss H."/>
            <person name="Holland R."/>
            <person name="Brandt P."/>
            <person name="Nyakatura G."/>
            <person name="Vezzi A."/>
            <person name="D'Angelo M."/>
            <person name="Pallavicini A."/>
            <person name="Toppo S."/>
            <person name="Simionati B."/>
            <person name="Conrad A."/>
            <person name="Hornischer K."/>
            <person name="Kauer G."/>
            <person name="Loehnert T.-H."/>
            <person name="Nordsiek G."/>
            <person name="Reichelt J."/>
            <person name="Scharfe M."/>
            <person name="Schoen O."/>
            <person name="Bargues M."/>
            <person name="Terol J."/>
            <person name="Climent J."/>
            <person name="Navarro P."/>
            <person name="Collado C."/>
            <person name="Perez-Perez A."/>
            <person name="Ottenwaelder B."/>
            <person name="Duchemin D."/>
            <person name="Cooke R."/>
            <person name="Laudie M."/>
            <person name="Berger-Llauro C."/>
            <person name="Purnelle B."/>
            <person name="Masuy D."/>
            <person name="de Haan M."/>
            <person name="Maarse A.C."/>
            <person name="Alcaraz J.-P."/>
            <person name="Cottet A."/>
            <person name="Casacuberta E."/>
            <person name="Monfort A."/>
            <person name="Argiriou A."/>
            <person name="Flores M."/>
            <person name="Liguori R."/>
            <person name="Vitale D."/>
            <person name="Mannhaupt G."/>
            <person name="Haase D."/>
            <person name="Schoof H."/>
            <person name="Rudd S."/>
            <person name="Zaccaria P."/>
            <person name="Mewes H.-W."/>
            <person name="Mayer K.F.X."/>
            <person name="Kaul S."/>
            <person name="Town C.D."/>
            <person name="Koo H.L."/>
            <person name="Tallon L.J."/>
            <person name="Jenkins J."/>
            <person name="Rooney T."/>
            <person name="Rizzo M."/>
            <person name="Walts A."/>
            <person name="Utterback T."/>
            <person name="Fujii C.Y."/>
            <person name="Shea T.P."/>
            <person name="Creasy T.H."/>
            <person name="Haas B."/>
            <person name="Maiti R."/>
            <person name="Wu D."/>
            <person name="Peterson J."/>
            <person name="Van Aken S."/>
            <person name="Pai G."/>
            <person name="Militscher J."/>
            <person name="Sellers P."/>
            <person name="Gill J.E."/>
            <person name="Feldblyum T.V."/>
            <person name="Preuss D."/>
            <person name="Lin X."/>
            <person name="Nierman W.C."/>
            <person name="Salzberg S.L."/>
            <person name="White O."/>
            <person name="Venter J.C."/>
            <person name="Fraser C.M."/>
            <person name="Kaneko T."/>
            <person name="Nakamura Y."/>
            <person name="Sato S."/>
            <person name="Kato T."/>
            <person name="Asamizu E."/>
            <person name="Sasamoto S."/>
            <person name="Kimura T."/>
            <person name="Idesawa K."/>
            <person name="Kawashima K."/>
            <person name="Kishida Y."/>
            <person name="Kiyokawa C."/>
            <person name="Kohara M."/>
            <person name="Matsumoto M."/>
            <person name="Matsuno A."/>
            <person name="Muraki A."/>
            <person name="Nakayama S."/>
            <person name="Nakazaki N."/>
            <person name="Shinpo S."/>
            <person name="Takeuchi C."/>
            <person name="Wada T."/>
            <person name="Watanabe A."/>
            <person name="Yamada M."/>
            <person name="Yasuda M."/>
            <person name="Tabata S."/>
        </authorList>
    </citation>
    <scope>NUCLEOTIDE SEQUENCE [LARGE SCALE GENOMIC DNA]</scope>
    <source>
        <strain>cv. Columbia</strain>
    </source>
</reference>
<reference key="2">
    <citation type="journal article" date="2017" name="Plant J.">
        <title>Araport11: a complete reannotation of the Arabidopsis thaliana reference genome.</title>
        <authorList>
            <person name="Cheng C.Y."/>
            <person name="Krishnakumar V."/>
            <person name="Chan A.P."/>
            <person name="Thibaud-Nissen F."/>
            <person name="Schobel S."/>
            <person name="Town C.D."/>
        </authorList>
    </citation>
    <scope>GENOME REANNOTATION</scope>
    <source>
        <strain>cv. Columbia</strain>
    </source>
</reference>
<reference evidence="3" key="3">
    <citation type="journal article" date="2001" name="Plant Mol. Biol.">
        <title>Two large Arabidopsis thaliana gene families are homologous to the Brassica gene superfamily that encodes pollen coat proteins and the male component of the self-incompatibility response.</title>
        <authorList>
            <person name="Vanoosthuyse V."/>
            <person name="Miege C."/>
            <person name="Dumas C."/>
            <person name="Cock J.M."/>
        </authorList>
    </citation>
    <scope>IDENTIFICATION</scope>
</reference>
<reference key="4">
    <citation type="journal article" date="2005" name="Plant Physiol.">
        <title>Genome organization of more than 300 defensin-like genes in Arabidopsis.</title>
        <authorList>
            <person name="Silverstein K.A.T."/>
            <person name="Graham M.A."/>
            <person name="Paape T.D."/>
            <person name="VandenBosch K.A."/>
        </authorList>
    </citation>
    <scope>GENE FAMILY</scope>
</reference>